<sequence>MKKIKEVIVVEGKDDTKRLALAVDADTLETNGSAISEATLAQIKTLQASRGVIVFTDPDFSGERIRKTISAAVPGVKHAFLPRKAGVPTKAGGSLGVEHASPAAIQTALAHLYTEQIDEPQQLISHHDLIAAGLLAGPTARQRREQLGERLGIGYVNGKQLPKRLQLFQIQPADFWAAVDQLTTEEK</sequence>
<gene>
    <name evidence="1" type="primary">rnmV</name>
    <name type="ordered locus">lp_0457</name>
</gene>
<proteinExistence type="inferred from homology"/>
<feature type="chain" id="PRO_0000416748" description="Ribonuclease M5">
    <location>
        <begin position="1"/>
        <end position="187"/>
    </location>
</feature>
<feature type="domain" description="Toprim" evidence="1">
    <location>
        <begin position="5"/>
        <end position="88"/>
    </location>
</feature>
<feature type="binding site" evidence="1">
    <location>
        <position position="11"/>
    </location>
    <ligand>
        <name>Mg(2+)</name>
        <dbReference type="ChEBI" id="CHEBI:18420"/>
        <label>1</label>
        <note>catalytic</note>
    </ligand>
</feature>
<feature type="binding site" evidence="1">
    <location>
        <position position="57"/>
    </location>
    <ligand>
        <name>Mg(2+)</name>
        <dbReference type="ChEBI" id="CHEBI:18420"/>
        <label>1</label>
        <note>catalytic</note>
    </ligand>
</feature>
<feature type="binding site" evidence="1">
    <location>
        <position position="57"/>
    </location>
    <ligand>
        <name>Mg(2+)</name>
        <dbReference type="ChEBI" id="CHEBI:18420"/>
        <label>2</label>
    </ligand>
</feature>
<feature type="binding site" evidence="1">
    <location>
        <position position="59"/>
    </location>
    <ligand>
        <name>Mg(2+)</name>
        <dbReference type="ChEBI" id="CHEBI:18420"/>
        <label>2</label>
    </ligand>
</feature>
<dbReference type="EC" id="3.1.26.8" evidence="1"/>
<dbReference type="EMBL" id="AL935263">
    <property type="protein sequence ID" value="CCC77960.1"/>
    <property type="molecule type" value="Genomic_DNA"/>
</dbReference>
<dbReference type="RefSeq" id="WP_011101014.1">
    <property type="nucleotide sequence ID" value="NC_004567.2"/>
</dbReference>
<dbReference type="RefSeq" id="YP_004888474.1">
    <property type="nucleotide sequence ID" value="NC_004567.2"/>
</dbReference>
<dbReference type="SMR" id="F9UU40"/>
<dbReference type="STRING" id="220668.lp_0457"/>
<dbReference type="EnsemblBacteria" id="CCC77960">
    <property type="protein sequence ID" value="CCC77960"/>
    <property type="gene ID" value="lp_0457"/>
</dbReference>
<dbReference type="GeneID" id="77217092"/>
<dbReference type="KEGG" id="lpl:lp_0457"/>
<dbReference type="PATRIC" id="fig|220668.9.peg.377"/>
<dbReference type="eggNOG" id="COG1658">
    <property type="taxonomic scope" value="Bacteria"/>
</dbReference>
<dbReference type="HOGENOM" id="CLU_109405_0_0_9"/>
<dbReference type="OrthoDB" id="9791329at2"/>
<dbReference type="PhylomeDB" id="F9UU40"/>
<dbReference type="Proteomes" id="UP000000432">
    <property type="component" value="Chromosome"/>
</dbReference>
<dbReference type="GO" id="GO:0005737">
    <property type="term" value="C:cytoplasm"/>
    <property type="evidence" value="ECO:0007669"/>
    <property type="project" value="UniProtKB-SubCell"/>
</dbReference>
<dbReference type="GO" id="GO:0046872">
    <property type="term" value="F:metal ion binding"/>
    <property type="evidence" value="ECO:0007669"/>
    <property type="project" value="UniProtKB-KW"/>
</dbReference>
<dbReference type="GO" id="GO:0043822">
    <property type="term" value="F:ribonuclease M5 activity"/>
    <property type="evidence" value="ECO:0007669"/>
    <property type="project" value="UniProtKB-UniRule"/>
</dbReference>
<dbReference type="GO" id="GO:0019843">
    <property type="term" value="F:rRNA binding"/>
    <property type="evidence" value="ECO:0007669"/>
    <property type="project" value="UniProtKB-KW"/>
</dbReference>
<dbReference type="GO" id="GO:0006364">
    <property type="term" value="P:rRNA processing"/>
    <property type="evidence" value="ECO:0007669"/>
    <property type="project" value="UniProtKB-UniRule"/>
</dbReference>
<dbReference type="CDD" id="cd01027">
    <property type="entry name" value="TOPRIM_RNase_M5_like"/>
    <property type="match status" value="1"/>
</dbReference>
<dbReference type="FunFam" id="3.40.1360.10:FF:000006">
    <property type="entry name" value="Ribonuclease M5"/>
    <property type="match status" value="1"/>
</dbReference>
<dbReference type="Gene3D" id="3.40.1360.10">
    <property type="match status" value="1"/>
</dbReference>
<dbReference type="HAMAP" id="MF_01469">
    <property type="entry name" value="RNase_M5"/>
    <property type="match status" value="1"/>
</dbReference>
<dbReference type="InterPro" id="IPR004466">
    <property type="entry name" value="RNase_M5"/>
</dbReference>
<dbReference type="InterPro" id="IPR025156">
    <property type="entry name" value="RNase_M5_C"/>
</dbReference>
<dbReference type="InterPro" id="IPR006171">
    <property type="entry name" value="TOPRIM_dom"/>
</dbReference>
<dbReference type="InterPro" id="IPR034141">
    <property type="entry name" value="TOPRIM_RNase_M5-like"/>
</dbReference>
<dbReference type="NCBIfam" id="TIGR00334">
    <property type="entry name" value="5S_RNA_mat_M5"/>
    <property type="match status" value="1"/>
</dbReference>
<dbReference type="PANTHER" id="PTHR39156">
    <property type="entry name" value="RIBONUCLEASE M5"/>
    <property type="match status" value="1"/>
</dbReference>
<dbReference type="PANTHER" id="PTHR39156:SF1">
    <property type="entry name" value="RIBONUCLEASE M5"/>
    <property type="match status" value="1"/>
</dbReference>
<dbReference type="Pfam" id="PF13331">
    <property type="entry name" value="DUF4093"/>
    <property type="match status" value="1"/>
</dbReference>
<dbReference type="Pfam" id="PF01751">
    <property type="entry name" value="Toprim"/>
    <property type="match status" value="1"/>
</dbReference>
<dbReference type="SMART" id="SM00493">
    <property type="entry name" value="TOPRIM"/>
    <property type="match status" value="1"/>
</dbReference>
<dbReference type="SUPFAM" id="SSF110455">
    <property type="entry name" value="Toprim domain"/>
    <property type="match status" value="1"/>
</dbReference>
<dbReference type="PROSITE" id="PS50880">
    <property type="entry name" value="TOPRIM"/>
    <property type="match status" value="1"/>
</dbReference>
<protein>
    <recommendedName>
        <fullName evidence="1">Ribonuclease M5</fullName>
        <ecNumber evidence="1">3.1.26.8</ecNumber>
    </recommendedName>
    <alternativeName>
        <fullName evidence="1">RNase M5</fullName>
    </alternativeName>
    <alternativeName>
        <fullName evidence="1">Ribosomal RNA terminal maturase M5</fullName>
    </alternativeName>
</protein>
<name>RNM5_LACPL</name>
<evidence type="ECO:0000255" key="1">
    <source>
        <dbReference type="HAMAP-Rule" id="MF_01469"/>
    </source>
</evidence>
<keyword id="KW-0963">Cytoplasm</keyword>
<keyword id="KW-0255">Endonuclease</keyword>
<keyword id="KW-0378">Hydrolase</keyword>
<keyword id="KW-0460">Magnesium</keyword>
<keyword id="KW-0479">Metal-binding</keyword>
<keyword id="KW-0540">Nuclease</keyword>
<keyword id="KW-1185">Reference proteome</keyword>
<keyword id="KW-0690">Ribosome biogenesis</keyword>
<keyword id="KW-0694">RNA-binding</keyword>
<keyword id="KW-0698">rRNA processing</keyword>
<keyword id="KW-0699">rRNA-binding</keyword>
<organism>
    <name type="scientific">Lactiplantibacillus plantarum (strain ATCC BAA-793 / NCIMB 8826 / WCFS1)</name>
    <name type="common">Lactobacillus plantarum</name>
    <dbReference type="NCBI Taxonomy" id="220668"/>
    <lineage>
        <taxon>Bacteria</taxon>
        <taxon>Bacillati</taxon>
        <taxon>Bacillota</taxon>
        <taxon>Bacilli</taxon>
        <taxon>Lactobacillales</taxon>
        <taxon>Lactobacillaceae</taxon>
        <taxon>Lactiplantibacillus</taxon>
    </lineage>
</organism>
<reference key="1">
    <citation type="journal article" date="2003" name="Proc. Natl. Acad. Sci. U.S.A.">
        <title>Complete genome sequence of Lactobacillus plantarum WCFS1.</title>
        <authorList>
            <person name="Kleerebezem M."/>
            <person name="Boekhorst J."/>
            <person name="van Kranenburg R."/>
            <person name="Molenaar D."/>
            <person name="Kuipers O.P."/>
            <person name="Leer R."/>
            <person name="Tarchini R."/>
            <person name="Peters S.A."/>
            <person name="Sandbrink H.M."/>
            <person name="Fiers M.W.E.J."/>
            <person name="Stiekema W."/>
            <person name="Klein Lankhorst R.M."/>
            <person name="Bron P.A."/>
            <person name="Hoffer S.M."/>
            <person name="Nierop Groot M.N."/>
            <person name="Kerkhoven R."/>
            <person name="De Vries M."/>
            <person name="Ursing B."/>
            <person name="De Vos W.M."/>
            <person name="Siezen R.J."/>
        </authorList>
    </citation>
    <scope>NUCLEOTIDE SEQUENCE [LARGE SCALE GENOMIC DNA]</scope>
    <source>
        <strain>ATCC BAA-793 / NCIMB 8826 / WCFS1</strain>
    </source>
</reference>
<reference key="2">
    <citation type="journal article" date="2012" name="J. Bacteriol.">
        <title>Complete resequencing and reannotation of the Lactobacillus plantarum WCFS1 genome.</title>
        <authorList>
            <person name="Siezen R.J."/>
            <person name="Francke C."/>
            <person name="Renckens B."/>
            <person name="Boekhorst J."/>
            <person name="Wels M."/>
            <person name="Kleerebezem M."/>
            <person name="van Hijum S.A."/>
        </authorList>
    </citation>
    <scope>NUCLEOTIDE SEQUENCE [LARGE SCALE GENOMIC DNA]</scope>
    <scope>GENOME REANNOTATION</scope>
    <source>
        <strain>ATCC BAA-793 / NCIMB 8826 / WCFS1</strain>
    </source>
</reference>
<comment type="function">
    <text evidence="1">Required for correct processing of both the 5' and 3' ends of 5S rRNA precursor. Cleaves both sides of a double-stranded region yielding mature 5S rRNA in one step.</text>
</comment>
<comment type="catalytic activity">
    <reaction evidence="1">
        <text>Endonucleolytic cleavage of RNA, removing 21 and 42 nucleotides, respectively, from the 5'- and 3'-termini of a 5S-rRNA precursor.</text>
        <dbReference type="EC" id="3.1.26.8"/>
    </reaction>
</comment>
<comment type="cofactor">
    <cofactor evidence="1">
        <name>Mg(2+)</name>
        <dbReference type="ChEBI" id="CHEBI:18420"/>
    </cofactor>
    <text evidence="1">Binds two Mg(2+) per subunit.</text>
</comment>
<comment type="subcellular location">
    <subcellularLocation>
        <location evidence="1">Cytoplasm</location>
    </subcellularLocation>
</comment>
<comment type="similarity">
    <text evidence="1">Belongs to the ribonuclease M5 family.</text>
</comment>
<accession>F9UU40</accession>